<accession>P01404</accession>
<dbReference type="EMBL" id="X53409">
    <property type="protein sequence ID" value="CAA37485.1"/>
    <property type="molecule type" value="mRNA"/>
</dbReference>
<dbReference type="PIR" id="S21299">
    <property type="entry name" value="T5EP2A"/>
</dbReference>
<dbReference type="SMR" id="P01404"/>
<dbReference type="GO" id="GO:0005576">
    <property type="term" value="C:extracellular region"/>
    <property type="evidence" value="ECO:0007669"/>
    <property type="project" value="UniProtKB-SubCell"/>
</dbReference>
<dbReference type="GO" id="GO:0090729">
    <property type="term" value="F:toxin activity"/>
    <property type="evidence" value="ECO:0007669"/>
    <property type="project" value="UniProtKB-KW"/>
</dbReference>
<dbReference type="CDD" id="cd00206">
    <property type="entry name" value="TFP_snake_toxin"/>
    <property type="match status" value="1"/>
</dbReference>
<dbReference type="Gene3D" id="2.10.60.10">
    <property type="entry name" value="CD59"/>
    <property type="match status" value="1"/>
</dbReference>
<dbReference type="InterPro" id="IPR003571">
    <property type="entry name" value="Snake_3FTx"/>
</dbReference>
<dbReference type="InterPro" id="IPR045860">
    <property type="entry name" value="Snake_toxin-like_sf"/>
</dbReference>
<dbReference type="InterPro" id="IPR018354">
    <property type="entry name" value="Snake_toxin_con_site"/>
</dbReference>
<dbReference type="InterPro" id="IPR054131">
    <property type="entry name" value="Toxin_cobra-type"/>
</dbReference>
<dbReference type="Pfam" id="PF21947">
    <property type="entry name" value="Toxin_cobra-type"/>
    <property type="match status" value="1"/>
</dbReference>
<dbReference type="SUPFAM" id="SSF57302">
    <property type="entry name" value="Snake toxin-like"/>
    <property type="match status" value="1"/>
</dbReference>
<dbReference type="PROSITE" id="PS00272">
    <property type="entry name" value="SNAKE_TOXIN"/>
    <property type="match status" value="1"/>
</dbReference>
<reference key="1">
    <citation type="submission" date="1990-06" db="EMBL/GenBank/DDBJ databases">
        <authorList>
            <person name="Ducancel F."/>
        </authorList>
    </citation>
    <scope>NUCLEOTIDE SEQUENCE [MRNA]</scope>
    <source>
        <tissue>Venom gland</tissue>
    </source>
</reference>
<reference key="2">
    <citation type="journal article" date="1974" name="J. Biol. Chem.">
        <title>Snake venom toxins. The purification and amino acid sequence of toxin TA2 from Dendroaspis angusticeps venom.</title>
        <authorList>
            <person name="Viljoen C.C."/>
            <person name="Botes D.P."/>
        </authorList>
    </citation>
    <scope>PROTEIN SEQUENCE OF 22-81</scope>
    <scope>TOXIC DOSE</scope>
    <scope>SUBCELLULAR LOCATION</scope>
    <source>
        <tissue>Venom</tissue>
    </source>
</reference>
<reference key="3">
    <citation type="journal article" date="2014" name="J. Venom Res.">
        <title>Peptides with in vitro anti-tumor activity from the venom of the Eastern green mamba, Dendroaspis angusticeps (Elapidae).</title>
        <authorList>
            <person name="Conlon J.M."/>
            <person name="Prajeep M."/>
            <person name="Mechkarska M."/>
            <person name="Arafat K."/>
            <person name="Attoub S."/>
            <person name="Adem A."/>
            <person name="Pla D."/>
            <person name="Calvete J.J."/>
        </authorList>
    </citation>
    <scope>FUNCTION</scope>
    <scope>MASS SPECTROMETRY</scope>
    <source>
        <tissue>Venom</tissue>
    </source>
</reference>
<name>3SOB8_DENAN</name>
<evidence type="ECO:0000250" key="1">
    <source>
        <dbReference type="UniProtKB" id="P0C1Z0"/>
    </source>
</evidence>
<evidence type="ECO:0000269" key="2">
    <source>
    </source>
</evidence>
<evidence type="ECO:0000269" key="3">
    <source>
    </source>
</evidence>
<evidence type="ECO:0000303" key="4">
    <source>
    </source>
</evidence>
<evidence type="ECO:0000305" key="5"/>
<organism>
    <name type="scientific">Dendroaspis angusticeps</name>
    <name type="common">Eastern green mamba</name>
    <name type="synonym">Naja angusticeps</name>
    <dbReference type="NCBI Taxonomy" id="8618"/>
    <lineage>
        <taxon>Eukaryota</taxon>
        <taxon>Metazoa</taxon>
        <taxon>Chordata</taxon>
        <taxon>Craniata</taxon>
        <taxon>Vertebrata</taxon>
        <taxon>Euteleostomi</taxon>
        <taxon>Lepidosauria</taxon>
        <taxon>Squamata</taxon>
        <taxon>Bifurcata</taxon>
        <taxon>Unidentata</taxon>
        <taxon>Episquamata</taxon>
        <taxon>Toxicofera</taxon>
        <taxon>Serpentes</taxon>
        <taxon>Colubroidea</taxon>
        <taxon>Elapidae</taxon>
        <taxon>Elapinae</taxon>
        <taxon>Dendroaspis</taxon>
    </lineage>
</organism>
<feature type="signal peptide" evidence="3">
    <location>
        <begin position="1"/>
        <end position="21"/>
    </location>
</feature>
<feature type="chain" id="PRO_0000035483" description="Toxin F-VIII" evidence="3">
    <location>
        <begin position="22"/>
        <end position="81"/>
    </location>
</feature>
<feature type="disulfide bond" evidence="1">
    <location>
        <begin position="24"/>
        <end position="43"/>
    </location>
</feature>
<feature type="disulfide bond" evidence="1">
    <location>
        <begin position="38"/>
        <end position="60"/>
    </location>
</feature>
<feature type="disulfide bond" evidence="1">
    <location>
        <begin position="62"/>
        <end position="73"/>
    </location>
</feature>
<feature type="disulfide bond" evidence="1">
    <location>
        <begin position="74"/>
        <end position="79"/>
    </location>
</feature>
<feature type="sequence conflict" description="In Ref. 2; AA sequence." evidence="5" ref="2">
    <original>I</original>
    <variation>V</variation>
    <location>
        <position position="54"/>
    </location>
</feature>
<protein>
    <recommendedName>
        <fullName>Toxin F-VIII</fullName>
    </recommendedName>
    <alternativeName>
        <fullName>Toxin DaF8</fullName>
    </alternativeName>
    <alternativeName>
        <fullName evidence="4">Toxin TA2</fullName>
    </alternativeName>
</protein>
<keyword id="KW-0903">Direct protein sequencing</keyword>
<keyword id="KW-1015">Disulfide bond</keyword>
<keyword id="KW-0964">Secreted</keyword>
<keyword id="KW-0732">Signal</keyword>
<keyword id="KW-0800">Toxin</keyword>
<comment type="function">
    <text evidence="2">Is cytotoxic against A549 cells (LC(50)=106 ug/ml).</text>
</comment>
<comment type="subcellular location">
    <subcellularLocation>
        <location evidence="3">Secreted</location>
    </subcellularLocation>
</comment>
<comment type="tissue specificity">
    <text evidence="5">Expressed by the venom gland.</text>
</comment>
<comment type="mass spectrometry" mass="6597.8" method="Unknown" evidence="2">
    <text>Average mass.</text>
</comment>
<comment type="toxic dose">
    <text evidence="3">LD(50) is &gt;250 mg/kg by subcutaneous injection.</text>
</comment>
<comment type="miscellaneous">
    <text evidence="2">Negative results: is not cytotoxic to MDA-MB-231, HT-29 cells, and HUVEC cells at concentrations up to 300 ug/ml and is not hemolytic at concentrations up to 1mg/ml. Does not inhibit the growth of reference strains of E.coli or S.aureus (MIC values &gt;200 ug/ml).</text>
</comment>
<comment type="similarity">
    <text evidence="5">Belongs to the three-finger toxin family. Short-chain subfamily. Orphan group XI sub-subfamily.</text>
</comment>
<sequence length="81" mass="8849">MKTLLLTLLVVTIVCLDLASTMICYSHKTPQPSATITCEEKTCYKKSVRKLPAIVAGRGCGCPSKEMLVAIHCCRSDKCNE</sequence>
<proteinExistence type="evidence at protein level"/>